<feature type="chain" id="PRO_0000272618" description="Tigger transposable element-derived protein 5">
    <location>
        <begin position="1"/>
        <end position="642"/>
    </location>
</feature>
<feature type="domain" description="HTH psq-type" evidence="3">
    <location>
        <begin position="47"/>
        <end position="98"/>
    </location>
</feature>
<feature type="domain" description="HTH CENPB-type" evidence="4">
    <location>
        <begin position="112"/>
        <end position="185"/>
    </location>
</feature>
<feature type="domain" description="DDE-1 1" evidence="2">
    <location>
        <begin position="233"/>
        <end position="357"/>
    </location>
</feature>
<feature type="domain" description="DDE-1 2" evidence="2">
    <location>
        <begin position="410"/>
        <end position="477"/>
    </location>
</feature>
<feature type="DNA-binding region" description="H-T-H motif" evidence="1">
    <location>
        <begin position="74"/>
        <end position="94"/>
    </location>
</feature>
<feature type="DNA-binding region" description="H-T-H motif" evidence="1">
    <location>
        <begin position="145"/>
        <end position="178"/>
    </location>
</feature>
<feature type="region of interest" description="Disordered" evidence="5">
    <location>
        <begin position="1"/>
        <end position="45"/>
    </location>
</feature>
<feature type="region of interest" description="Disordered" evidence="5">
    <location>
        <begin position="185"/>
        <end position="233"/>
    </location>
</feature>
<feature type="region of interest" description="Disordered" evidence="5">
    <location>
        <begin position="535"/>
        <end position="587"/>
    </location>
</feature>
<feature type="compositionally biased region" description="Pro residues" evidence="5">
    <location>
        <begin position="1"/>
        <end position="10"/>
    </location>
</feature>
<feature type="compositionally biased region" description="Pro residues" evidence="5">
    <location>
        <begin position="19"/>
        <end position="43"/>
    </location>
</feature>
<feature type="compositionally biased region" description="Pro residues" evidence="5">
    <location>
        <begin position="192"/>
        <end position="202"/>
    </location>
</feature>
<feature type="compositionally biased region" description="Pro residues" evidence="5">
    <location>
        <begin position="218"/>
        <end position="227"/>
    </location>
</feature>
<feature type="compositionally biased region" description="Pro residues" evidence="5">
    <location>
        <begin position="552"/>
        <end position="562"/>
    </location>
</feature>
<feature type="splice variant" id="VSP_042796" description="In isoform 2." evidence="9">
    <location>
        <begin position="1"/>
        <end position="49"/>
    </location>
</feature>
<feature type="sequence variant" id="VAR_030043" description="In dbSNP:rs10282929." evidence="6 7 8">
    <original>M</original>
    <variation>I</variation>
    <location>
        <position position="568"/>
    </location>
</feature>
<feature type="sequence conflict" description="In Ref. 3; BAD97303." evidence="10" ref="3">
    <original>W</original>
    <variation>C</variation>
    <location>
        <position position="91"/>
    </location>
</feature>
<feature type="sequence conflict" description="In Ref. 2; AAH69229." evidence="10" ref="2">
    <original>G</original>
    <variation>R</variation>
    <location>
        <position position="262"/>
    </location>
</feature>
<feature type="sequence conflict" description="In Ref. 4; BAB55398." evidence="10" ref="4">
    <original>D</original>
    <variation>G</variation>
    <location>
        <position position="447"/>
    </location>
</feature>
<feature type="sequence conflict" description="In Ref. 2; AAH32632." evidence="10" ref="2">
    <original>G</original>
    <variation>W</variation>
    <location>
        <position position="632"/>
    </location>
</feature>
<reference key="1">
    <citation type="journal article" date="2006" name="Nature">
        <title>DNA sequence and analysis of human chromosome 8.</title>
        <authorList>
            <person name="Nusbaum C."/>
            <person name="Mikkelsen T.S."/>
            <person name="Zody M.C."/>
            <person name="Asakawa S."/>
            <person name="Taudien S."/>
            <person name="Garber M."/>
            <person name="Kodira C.D."/>
            <person name="Schueler M.G."/>
            <person name="Shimizu A."/>
            <person name="Whittaker C.A."/>
            <person name="Chang J.L."/>
            <person name="Cuomo C.A."/>
            <person name="Dewar K."/>
            <person name="FitzGerald M.G."/>
            <person name="Yang X."/>
            <person name="Allen N.R."/>
            <person name="Anderson S."/>
            <person name="Asakawa T."/>
            <person name="Blechschmidt K."/>
            <person name="Bloom T."/>
            <person name="Borowsky M.L."/>
            <person name="Butler J."/>
            <person name="Cook A."/>
            <person name="Corum B."/>
            <person name="DeArellano K."/>
            <person name="DeCaprio D."/>
            <person name="Dooley K.T."/>
            <person name="Dorris L. III"/>
            <person name="Engels R."/>
            <person name="Gloeckner G."/>
            <person name="Hafez N."/>
            <person name="Hagopian D.S."/>
            <person name="Hall J.L."/>
            <person name="Ishikawa S.K."/>
            <person name="Jaffe D.B."/>
            <person name="Kamat A."/>
            <person name="Kudoh J."/>
            <person name="Lehmann R."/>
            <person name="Lokitsang T."/>
            <person name="Macdonald P."/>
            <person name="Major J.E."/>
            <person name="Matthews C.D."/>
            <person name="Mauceli E."/>
            <person name="Menzel U."/>
            <person name="Mihalev A.H."/>
            <person name="Minoshima S."/>
            <person name="Murayama Y."/>
            <person name="Naylor J.W."/>
            <person name="Nicol R."/>
            <person name="Nguyen C."/>
            <person name="O'Leary S.B."/>
            <person name="O'Neill K."/>
            <person name="Parker S.C.J."/>
            <person name="Polley A."/>
            <person name="Raymond C.K."/>
            <person name="Reichwald K."/>
            <person name="Rodriguez J."/>
            <person name="Sasaki T."/>
            <person name="Schilhabel M."/>
            <person name="Siddiqui R."/>
            <person name="Smith C.L."/>
            <person name="Sneddon T.P."/>
            <person name="Talamas J.A."/>
            <person name="Tenzin P."/>
            <person name="Topham K."/>
            <person name="Venkataraman V."/>
            <person name="Wen G."/>
            <person name="Yamazaki S."/>
            <person name="Young S.K."/>
            <person name="Zeng Q."/>
            <person name="Zimmer A.R."/>
            <person name="Rosenthal A."/>
            <person name="Birren B.W."/>
            <person name="Platzer M."/>
            <person name="Shimizu N."/>
            <person name="Lander E.S."/>
        </authorList>
    </citation>
    <scope>NUCLEOTIDE SEQUENCE [LARGE SCALE GENOMIC DNA]</scope>
</reference>
<reference key="2">
    <citation type="journal article" date="2004" name="Genome Res.">
        <title>The status, quality, and expansion of the NIH full-length cDNA project: the Mammalian Gene Collection (MGC).</title>
        <authorList>
            <consortium name="The MGC Project Team"/>
        </authorList>
    </citation>
    <scope>NUCLEOTIDE SEQUENCE [LARGE SCALE MRNA] (ISOFORM 2)</scope>
    <scope>NUCLEOTIDE SEQUENCE [LARGE SCALE MRNA] OF 167-642 (ISOFORM 1/2)</scope>
    <scope>VARIANT ILE-568</scope>
    <source>
        <tissue>Mammary gland</tissue>
        <tissue>Skin</tissue>
    </source>
</reference>
<reference key="3">
    <citation type="submission" date="2005-04" db="EMBL/GenBank/DDBJ databases">
        <authorList>
            <person name="Totoki Y."/>
            <person name="Toyoda A."/>
            <person name="Takeda T."/>
            <person name="Sakaki Y."/>
            <person name="Tanaka A."/>
            <person name="Yokoyama S."/>
        </authorList>
    </citation>
    <scope>NUCLEOTIDE SEQUENCE [LARGE SCALE MRNA] OF 2-642 (ISOFORM 1)</scope>
    <scope>VARIANT ILE-568</scope>
    <source>
        <tissue>Kidney</tissue>
    </source>
</reference>
<reference key="4">
    <citation type="journal article" date="2004" name="Nat. Genet.">
        <title>Complete sequencing and characterization of 21,243 full-length human cDNAs.</title>
        <authorList>
            <person name="Ota T."/>
            <person name="Suzuki Y."/>
            <person name="Nishikawa T."/>
            <person name="Otsuki T."/>
            <person name="Sugiyama T."/>
            <person name="Irie R."/>
            <person name="Wakamatsu A."/>
            <person name="Hayashi K."/>
            <person name="Sato H."/>
            <person name="Nagai K."/>
            <person name="Kimura K."/>
            <person name="Makita H."/>
            <person name="Sekine M."/>
            <person name="Obayashi M."/>
            <person name="Nishi T."/>
            <person name="Shibahara T."/>
            <person name="Tanaka T."/>
            <person name="Ishii S."/>
            <person name="Yamamoto J."/>
            <person name="Saito K."/>
            <person name="Kawai Y."/>
            <person name="Isono Y."/>
            <person name="Nakamura Y."/>
            <person name="Nagahari K."/>
            <person name="Murakami K."/>
            <person name="Yasuda T."/>
            <person name="Iwayanagi T."/>
            <person name="Wagatsuma M."/>
            <person name="Shiratori A."/>
            <person name="Sudo H."/>
            <person name="Hosoiri T."/>
            <person name="Kaku Y."/>
            <person name="Kodaira H."/>
            <person name="Kondo H."/>
            <person name="Sugawara M."/>
            <person name="Takahashi M."/>
            <person name="Kanda K."/>
            <person name="Yokoi T."/>
            <person name="Furuya T."/>
            <person name="Kikkawa E."/>
            <person name="Omura Y."/>
            <person name="Abe K."/>
            <person name="Kamihara K."/>
            <person name="Katsuta N."/>
            <person name="Sato K."/>
            <person name="Tanikawa M."/>
            <person name="Yamazaki M."/>
            <person name="Ninomiya K."/>
            <person name="Ishibashi T."/>
            <person name="Yamashita H."/>
            <person name="Murakawa K."/>
            <person name="Fujimori K."/>
            <person name="Tanai H."/>
            <person name="Kimata M."/>
            <person name="Watanabe M."/>
            <person name="Hiraoka S."/>
            <person name="Chiba Y."/>
            <person name="Ishida S."/>
            <person name="Ono Y."/>
            <person name="Takiguchi S."/>
            <person name="Watanabe S."/>
            <person name="Yosida M."/>
            <person name="Hotuta T."/>
            <person name="Kusano J."/>
            <person name="Kanehori K."/>
            <person name="Takahashi-Fujii A."/>
            <person name="Hara H."/>
            <person name="Tanase T.-O."/>
            <person name="Nomura Y."/>
            <person name="Togiya S."/>
            <person name="Komai F."/>
            <person name="Hara R."/>
            <person name="Takeuchi K."/>
            <person name="Arita M."/>
            <person name="Imose N."/>
            <person name="Musashino K."/>
            <person name="Yuuki H."/>
            <person name="Oshima A."/>
            <person name="Sasaki N."/>
            <person name="Aotsuka S."/>
            <person name="Yoshikawa Y."/>
            <person name="Matsunawa H."/>
            <person name="Ichihara T."/>
            <person name="Shiohata N."/>
            <person name="Sano S."/>
            <person name="Moriya S."/>
            <person name="Momiyama H."/>
            <person name="Satoh N."/>
            <person name="Takami S."/>
            <person name="Terashima Y."/>
            <person name="Suzuki O."/>
            <person name="Nakagawa S."/>
            <person name="Senoh A."/>
            <person name="Mizoguchi H."/>
            <person name="Goto Y."/>
            <person name="Shimizu F."/>
            <person name="Wakebe H."/>
            <person name="Hishigaki H."/>
            <person name="Watanabe T."/>
            <person name="Sugiyama A."/>
            <person name="Takemoto M."/>
            <person name="Kawakami B."/>
            <person name="Yamazaki M."/>
            <person name="Watanabe K."/>
            <person name="Kumagai A."/>
            <person name="Itakura S."/>
            <person name="Fukuzumi Y."/>
            <person name="Fujimori Y."/>
            <person name="Komiyama M."/>
            <person name="Tashiro H."/>
            <person name="Tanigami A."/>
            <person name="Fujiwara T."/>
            <person name="Ono T."/>
            <person name="Yamada K."/>
            <person name="Fujii Y."/>
            <person name="Ozaki K."/>
            <person name="Hirao M."/>
            <person name="Ohmori Y."/>
            <person name="Kawabata A."/>
            <person name="Hikiji T."/>
            <person name="Kobatake N."/>
            <person name="Inagaki H."/>
            <person name="Ikema Y."/>
            <person name="Okamoto S."/>
            <person name="Okitani R."/>
            <person name="Kawakami T."/>
            <person name="Noguchi S."/>
            <person name="Itoh T."/>
            <person name="Shigeta K."/>
            <person name="Senba T."/>
            <person name="Matsumura K."/>
            <person name="Nakajima Y."/>
            <person name="Mizuno T."/>
            <person name="Morinaga M."/>
            <person name="Sasaki M."/>
            <person name="Togashi T."/>
            <person name="Oyama M."/>
            <person name="Hata H."/>
            <person name="Watanabe M."/>
            <person name="Komatsu T."/>
            <person name="Mizushima-Sugano J."/>
            <person name="Satoh T."/>
            <person name="Shirai Y."/>
            <person name="Takahashi Y."/>
            <person name="Nakagawa K."/>
            <person name="Okumura K."/>
            <person name="Nagase T."/>
            <person name="Nomura N."/>
            <person name="Kikuchi H."/>
            <person name="Masuho Y."/>
            <person name="Yamashita R."/>
            <person name="Nakai K."/>
            <person name="Yada T."/>
            <person name="Nakamura Y."/>
            <person name="Ohara O."/>
            <person name="Isogai T."/>
            <person name="Sugano S."/>
        </authorList>
    </citation>
    <scope>NUCLEOTIDE SEQUENCE [LARGE SCALE MRNA] OF 148-642 (ISOFORMS 1/2)</scope>
    <scope>VARIANT ILE-568</scope>
    <source>
        <tissue>Placenta</tissue>
    </source>
</reference>
<proteinExistence type="evidence at protein level"/>
<accession>Q53EQ6</accession>
<accession>E7EWS2</accession>
<accession>Q6NT83</accession>
<accession>Q8N5A1</accession>
<accession>Q96JW8</accession>
<sequence>MYPAGPPAGPVPRRGRRPLPGPPAPAPAPVPAARPPPPAPGPRPRVAVKMAFRKAYSIKDKLQAIERVKGGERQASVCRDFGVPGGTLRGWLKDEPKLRWFLEQLGGEVGTQRKKMRLANEEEIDRAVYAWFLALRQHGVPLSGPLIQAQAEAFARQIYGPECTFKASHGWFWRWQKRHGISSQRFYGEAGPPAPSPAPGPPVKEEPALPSGAGPLPDRAPAPPPPAEGGYGDEQIYSASVTGLYWKLLPEQAAPPGAGDPGAGGCGRRWRGDRVTVLLAANLTGSHKLKPLVIGRLPDPPSLRHHNQDKFPASYRYSPDAWLSRPLLRGWFFEEFVPGVKRYLRRSCLQQKAVLLVAHPPCPSPAASMPALDSEDAPVRCRPEPLGPPEELQTPDGAVRVLFLSKGSSRAHIPAPLEQGVVAAFKQLYKRELLRLAVSCASGSPLDFMRSFMLKDMLYLAGLSWDLVQAGSIERCWLLGLRAAFEPRPGEDSAGQPAQAEEAAEHSRVLSDLTHLAALAYKCLAPEEVAEWLHLDDDGGPPEGCREEVGPALPPAAPPAPASLPSAMGGGEDEEEATDYGGTSVPTAGEAVRGLETALRWLENQDPREVGPLRLVQLRSLISMARRLGGIGHTPAGPYDGV</sequence>
<dbReference type="EMBL" id="AC067930">
    <property type="status" value="NOT_ANNOTATED_CDS"/>
    <property type="molecule type" value="Genomic_DNA"/>
</dbReference>
<dbReference type="EMBL" id="BC032632">
    <property type="protein sequence ID" value="AAH32632.1"/>
    <property type="status" value="ALT_INIT"/>
    <property type="molecule type" value="mRNA"/>
</dbReference>
<dbReference type="EMBL" id="BC069229">
    <property type="protein sequence ID" value="AAH69229.1"/>
    <property type="molecule type" value="mRNA"/>
</dbReference>
<dbReference type="EMBL" id="AK223583">
    <property type="protein sequence ID" value="BAD97303.1"/>
    <property type="status" value="ALT_INIT"/>
    <property type="molecule type" value="mRNA"/>
</dbReference>
<dbReference type="EMBL" id="AK027832">
    <property type="protein sequence ID" value="BAB55398.1"/>
    <property type="status" value="ALT_INIT"/>
    <property type="molecule type" value="mRNA"/>
</dbReference>
<dbReference type="CCDS" id="CCDS6406.2">
    <molecule id="Q53EQ6-1"/>
</dbReference>
<dbReference type="RefSeq" id="NP_116251.4">
    <molecule id="Q53EQ6-1"/>
    <property type="nucleotide sequence ID" value="NM_032862.4"/>
</dbReference>
<dbReference type="SMR" id="Q53EQ6"/>
<dbReference type="BioGRID" id="124381">
    <property type="interactions" value="324"/>
</dbReference>
<dbReference type="FunCoup" id="Q53EQ6">
    <property type="interactions" value="621"/>
</dbReference>
<dbReference type="IntAct" id="Q53EQ6">
    <property type="interactions" value="64"/>
</dbReference>
<dbReference type="STRING" id="9606.ENSP00000421489"/>
<dbReference type="iPTMnet" id="Q53EQ6"/>
<dbReference type="PhosphoSitePlus" id="Q53EQ6"/>
<dbReference type="BioMuta" id="TIGD5"/>
<dbReference type="DMDM" id="384872678"/>
<dbReference type="jPOST" id="Q53EQ6"/>
<dbReference type="MassIVE" id="Q53EQ6"/>
<dbReference type="PaxDb" id="9606-ENSP00000421489"/>
<dbReference type="PeptideAtlas" id="Q53EQ6"/>
<dbReference type="ProteomicsDB" id="62445">
    <molecule id="Q53EQ6-1"/>
</dbReference>
<dbReference type="ProteomicsDB" id="62446">
    <molecule id="Q53EQ6-2"/>
</dbReference>
<dbReference type="Antibodypedia" id="43484">
    <property type="antibodies" value="35 antibodies from 14 providers"/>
</dbReference>
<dbReference type="DNASU" id="84948"/>
<dbReference type="Ensembl" id="ENST00000321385.5">
    <molecule id="Q53EQ6-1"/>
    <property type="protein sequence ID" value="ENSP00000315906.4"/>
    <property type="gene ID" value="ENSG00000278016.2"/>
</dbReference>
<dbReference type="Ensembl" id="ENST00000504548.4">
    <molecule id="Q53EQ6-1"/>
    <property type="protein sequence ID" value="ENSP00000421489.2"/>
    <property type="gene ID" value="ENSG00000179886.6"/>
</dbReference>
<dbReference type="GeneID" id="84948"/>
<dbReference type="KEGG" id="hsa:84948"/>
<dbReference type="MANE-Select" id="ENST00000504548.4">
    <property type="protein sequence ID" value="ENSP00000421489.2"/>
    <property type="RefSeq nucleotide sequence ID" value="NM_032862.5"/>
    <property type="RefSeq protein sequence ID" value="NP_116251.4"/>
</dbReference>
<dbReference type="UCSC" id="uc003yyx.3">
    <molecule id="Q53EQ6-1"/>
    <property type="organism name" value="human"/>
</dbReference>
<dbReference type="AGR" id="HGNC:18336"/>
<dbReference type="CTD" id="84948"/>
<dbReference type="DisGeNET" id="84948"/>
<dbReference type="GeneCards" id="TIGD5"/>
<dbReference type="HGNC" id="HGNC:18336">
    <property type="gene designation" value="TIGD5"/>
</dbReference>
<dbReference type="HPA" id="ENSG00000179886">
    <property type="expression patterns" value="Low tissue specificity"/>
</dbReference>
<dbReference type="neXtProt" id="NX_Q53EQ6"/>
<dbReference type="OpenTargets" id="ENSG00000179886"/>
<dbReference type="VEuPathDB" id="HostDB:ENSG00000179886"/>
<dbReference type="eggNOG" id="KOG3105">
    <property type="taxonomic scope" value="Eukaryota"/>
</dbReference>
<dbReference type="GeneTree" id="ENSGT00940000154420"/>
<dbReference type="HOGENOM" id="CLU_018294_1_1_1"/>
<dbReference type="InParanoid" id="Q53EQ6"/>
<dbReference type="OMA" id="AYKCLAP"/>
<dbReference type="OrthoDB" id="5919228at2759"/>
<dbReference type="PAN-GO" id="Q53EQ6">
    <property type="GO annotations" value="0 GO annotations based on evolutionary models"/>
</dbReference>
<dbReference type="PhylomeDB" id="Q53EQ6"/>
<dbReference type="TreeFam" id="TF338616"/>
<dbReference type="PathwayCommons" id="Q53EQ6"/>
<dbReference type="SignaLink" id="Q53EQ6"/>
<dbReference type="BioGRID-ORCS" id="84948">
    <property type="hits" value="14 hits in 1159 CRISPR screens"/>
</dbReference>
<dbReference type="ChiTaRS" id="TIGD5">
    <property type="organism name" value="human"/>
</dbReference>
<dbReference type="GenomeRNAi" id="84948"/>
<dbReference type="Pharos" id="Q53EQ6">
    <property type="development level" value="Tdark"/>
</dbReference>
<dbReference type="PRO" id="PR:Q53EQ6"/>
<dbReference type="Proteomes" id="UP000005640">
    <property type="component" value="Chromosome 8"/>
</dbReference>
<dbReference type="RNAct" id="Q53EQ6">
    <property type="molecule type" value="protein"/>
</dbReference>
<dbReference type="Bgee" id="ENSG00000179886">
    <property type="expression patterns" value="Expressed in primordial germ cell in gonad and 96 other cell types or tissues"/>
</dbReference>
<dbReference type="GO" id="GO:0005634">
    <property type="term" value="C:nucleus"/>
    <property type="evidence" value="ECO:0000318"/>
    <property type="project" value="GO_Central"/>
</dbReference>
<dbReference type="GO" id="GO:0003677">
    <property type="term" value="F:DNA binding"/>
    <property type="evidence" value="ECO:0000318"/>
    <property type="project" value="GO_Central"/>
</dbReference>
<dbReference type="FunFam" id="1.10.10.10:FF:000293">
    <property type="entry name" value="Tigger transposable element-derived protein 5"/>
    <property type="match status" value="1"/>
</dbReference>
<dbReference type="Gene3D" id="1.10.10.60">
    <property type="entry name" value="Homeodomain-like"/>
    <property type="match status" value="1"/>
</dbReference>
<dbReference type="Gene3D" id="1.10.10.10">
    <property type="entry name" value="Winged helix-like DNA-binding domain superfamily/Winged helix DNA-binding domain"/>
    <property type="match status" value="1"/>
</dbReference>
<dbReference type="InterPro" id="IPR050863">
    <property type="entry name" value="CenT-Element_Derived"/>
</dbReference>
<dbReference type="InterPro" id="IPR004875">
    <property type="entry name" value="DDE_SF_endonuclease_dom"/>
</dbReference>
<dbReference type="InterPro" id="IPR009057">
    <property type="entry name" value="Homeodomain-like_sf"/>
</dbReference>
<dbReference type="InterPro" id="IPR006600">
    <property type="entry name" value="HTH_CenpB_DNA-bd_dom"/>
</dbReference>
<dbReference type="InterPro" id="IPR007889">
    <property type="entry name" value="HTH_Psq"/>
</dbReference>
<dbReference type="InterPro" id="IPR036388">
    <property type="entry name" value="WH-like_DNA-bd_sf"/>
</dbReference>
<dbReference type="PANTHER" id="PTHR19303:SF56">
    <property type="entry name" value="TIGGER TRANSPOSABLE ELEMENT-DERIVED PROTEIN 5"/>
    <property type="match status" value="1"/>
</dbReference>
<dbReference type="PANTHER" id="PTHR19303">
    <property type="entry name" value="TRANSPOSON"/>
    <property type="match status" value="1"/>
</dbReference>
<dbReference type="Pfam" id="PF04218">
    <property type="entry name" value="CENP-B_N"/>
    <property type="match status" value="1"/>
</dbReference>
<dbReference type="Pfam" id="PF03184">
    <property type="entry name" value="DDE_1"/>
    <property type="match status" value="1"/>
</dbReference>
<dbReference type="Pfam" id="PF03221">
    <property type="entry name" value="HTH_Tnp_Tc5"/>
    <property type="match status" value="1"/>
</dbReference>
<dbReference type="SMART" id="SM00674">
    <property type="entry name" value="CENPB"/>
    <property type="match status" value="1"/>
</dbReference>
<dbReference type="SUPFAM" id="SSF46689">
    <property type="entry name" value="Homeodomain-like"/>
    <property type="match status" value="2"/>
</dbReference>
<dbReference type="PROSITE" id="PS51253">
    <property type="entry name" value="HTH_CENPB"/>
    <property type="match status" value="1"/>
</dbReference>
<dbReference type="PROSITE" id="PS50960">
    <property type="entry name" value="HTH_PSQ"/>
    <property type="match status" value="1"/>
</dbReference>
<protein>
    <recommendedName>
        <fullName>Tigger transposable element-derived protein 5</fullName>
    </recommendedName>
</protein>
<organism>
    <name type="scientific">Homo sapiens</name>
    <name type="common">Human</name>
    <dbReference type="NCBI Taxonomy" id="9606"/>
    <lineage>
        <taxon>Eukaryota</taxon>
        <taxon>Metazoa</taxon>
        <taxon>Chordata</taxon>
        <taxon>Craniata</taxon>
        <taxon>Vertebrata</taxon>
        <taxon>Euteleostomi</taxon>
        <taxon>Mammalia</taxon>
        <taxon>Eutheria</taxon>
        <taxon>Euarchontoglires</taxon>
        <taxon>Primates</taxon>
        <taxon>Haplorrhini</taxon>
        <taxon>Catarrhini</taxon>
        <taxon>Hominidae</taxon>
        <taxon>Homo</taxon>
    </lineage>
</organism>
<keyword id="KW-0025">Alternative splicing</keyword>
<keyword id="KW-0238">DNA-binding</keyword>
<keyword id="KW-0539">Nucleus</keyword>
<keyword id="KW-1267">Proteomics identification</keyword>
<keyword id="KW-1185">Reference proteome</keyword>
<keyword id="KW-0677">Repeat</keyword>
<name>TIGD5_HUMAN</name>
<evidence type="ECO:0000250" key="1"/>
<evidence type="ECO:0000255" key="2"/>
<evidence type="ECO:0000255" key="3">
    <source>
        <dbReference type="PROSITE-ProRule" id="PRU00320"/>
    </source>
</evidence>
<evidence type="ECO:0000255" key="4">
    <source>
        <dbReference type="PROSITE-ProRule" id="PRU00583"/>
    </source>
</evidence>
<evidence type="ECO:0000256" key="5">
    <source>
        <dbReference type="SAM" id="MobiDB-lite"/>
    </source>
</evidence>
<evidence type="ECO:0000269" key="6">
    <source>
    </source>
</evidence>
<evidence type="ECO:0000269" key="7">
    <source>
    </source>
</evidence>
<evidence type="ECO:0000269" key="8">
    <source ref="3"/>
</evidence>
<evidence type="ECO:0000303" key="9">
    <source>
    </source>
</evidence>
<evidence type="ECO:0000305" key="10"/>
<gene>
    <name type="primary">TIGD5</name>
</gene>
<comment type="interaction">
    <interactant intactId="EBI-10242213">
        <id>Q53EQ6-2</id>
    </interactant>
    <interactant intactId="EBI-10968534">
        <id>P50570-2</id>
        <label>DNM2</label>
    </interactant>
    <organismsDiffer>false</organismsDiffer>
    <experiments>3</experiments>
</comment>
<comment type="interaction">
    <interactant intactId="EBI-10242213">
        <id>Q53EQ6-2</id>
    </interactant>
    <interactant intactId="EBI-10194128">
        <id>Q1RN33</id>
        <label>MAGEA4</label>
    </interactant>
    <organismsDiffer>false</organismsDiffer>
    <experiments>3</experiments>
</comment>
<comment type="subcellular location">
    <subcellularLocation>
        <location evidence="10">Nucleus</location>
    </subcellularLocation>
</comment>
<comment type="alternative products">
    <event type="alternative splicing"/>
    <isoform>
        <id>Q53EQ6-1</id>
        <name>1</name>
        <sequence type="displayed"/>
    </isoform>
    <isoform>
        <id>Q53EQ6-2</id>
        <name>2</name>
        <sequence type="described" ref="VSP_042796"/>
    </isoform>
</comment>
<comment type="similarity">
    <text evidence="10">Belongs to the tigger transposable element derived protein family.</text>
</comment>
<comment type="sequence caution" evidence="10">
    <conflict type="erroneous initiation">
        <sequence resource="EMBL-CDS" id="AAH32632"/>
    </conflict>
    <text>Truncated N-terminus.</text>
</comment>
<comment type="sequence caution" evidence="10">
    <conflict type="erroneous initiation">
        <sequence resource="EMBL-CDS" id="BAB55398"/>
    </conflict>
    <text>Truncated N-terminus.</text>
</comment>
<comment type="sequence caution" evidence="10">
    <conflict type="erroneous initiation">
        <sequence resource="EMBL-CDS" id="BAD97303"/>
    </conflict>
    <text>Truncated N-terminus.</text>
</comment>